<gene>
    <name type="primary">argS</name>
    <name type="ordered locus">TTE2533</name>
</gene>
<comment type="catalytic activity">
    <reaction>
        <text>tRNA(Arg) + L-arginine + ATP = L-arginyl-tRNA(Arg) + AMP + diphosphate</text>
        <dbReference type="Rhea" id="RHEA:20301"/>
        <dbReference type="Rhea" id="RHEA-COMP:9658"/>
        <dbReference type="Rhea" id="RHEA-COMP:9673"/>
        <dbReference type="ChEBI" id="CHEBI:30616"/>
        <dbReference type="ChEBI" id="CHEBI:32682"/>
        <dbReference type="ChEBI" id="CHEBI:33019"/>
        <dbReference type="ChEBI" id="CHEBI:78442"/>
        <dbReference type="ChEBI" id="CHEBI:78513"/>
        <dbReference type="ChEBI" id="CHEBI:456215"/>
        <dbReference type="EC" id="6.1.1.19"/>
    </reaction>
</comment>
<comment type="subunit">
    <text evidence="1">Monomer.</text>
</comment>
<comment type="subcellular location">
    <subcellularLocation>
        <location evidence="1">Cytoplasm</location>
    </subcellularLocation>
</comment>
<comment type="similarity">
    <text evidence="2">Belongs to the class-I aminoacyl-tRNA synthetase family.</text>
</comment>
<proteinExistence type="inferred from homology"/>
<feature type="chain" id="PRO_0000151629" description="Arginine--tRNA ligase">
    <location>
        <begin position="1"/>
        <end position="562"/>
    </location>
</feature>
<feature type="short sequence motif" description="'HIGH' region">
    <location>
        <begin position="136"/>
        <end position="146"/>
    </location>
</feature>
<dbReference type="EC" id="6.1.1.19"/>
<dbReference type="EMBL" id="AE008691">
    <property type="protein sequence ID" value="AAM25662.1"/>
    <property type="molecule type" value="Genomic_DNA"/>
</dbReference>
<dbReference type="RefSeq" id="WP_011026543.1">
    <property type="nucleotide sequence ID" value="NC_003869.1"/>
</dbReference>
<dbReference type="SMR" id="Q8R786"/>
<dbReference type="STRING" id="273068.TTE2533"/>
<dbReference type="KEGG" id="tte:TTE2533"/>
<dbReference type="eggNOG" id="COG0018">
    <property type="taxonomic scope" value="Bacteria"/>
</dbReference>
<dbReference type="HOGENOM" id="CLU_006406_0_1_9"/>
<dbReference type="OrthoDB" id="9805987at2"/>
<dbReference type="Proteomes" id="UP000000555">
    <property type="component" value="Chromosome"/>
</dbReference>
<dbReference type="GO" id="GO:0005737">
    <property type="term" value="C:cytoplasm"/>
    <property type="evidence" value="ECO:0007669"/>
    <property type="project" value="UniProtKB-SubCell"/>
</dbReference>
<dbReference type="GO" id="GO:0004814">
    <property type="term" value="F:arginine-tRNA ligase activity"/>
    <property type="evidence" value="ECO:0007669"/>
    <property type="project" value="UniProtKB-UniRule"/>
</dbReference>
<dbReference type="GO" id="GO:0005524">
    <property type="term" value="F:ATP binding"/>
    <property type="evidence" value="ECO:0007669"/>
    <property type="project" value="UniProtKB-UniRule"/>
</dbReference>
<dbReference type="GO" id="GO:0006420">
    <property type="term" value="P:arginyl-tRNA aminoacylation"/>
    <property type="evidence" value="ECO:0007669"/>
    <property type="project" value="UniProtKB-UniRule"/>
</dbReference>
<dbReference type="CDD" id="cd07956">
    <property type="entry name" value="Anticodon_Ia_Arg"/>
    <property type="match status" value="1"/>
</dbReference>
<dbReference type="CDD" id="cd00671">
    <property type="entry name" value="ArgRS_core"/>
    <property type="match status" value="1"/>
</dbReference>
<dbReference type="FunFam" id="1.10.730.10:FF:000008">
    <property type="entry name" value="Arginine--tRNA ligase"/>
    <property type="match status" value="1"/>
</dbReference>
<dbReference type="FunFam" id="3.30.1360.70:FF:000003">
    <property type="entry name" value="Arginine--tRNA ligase"/>
    <property type="match status" value="1"/>
</dbReference>
<dbReference type="FunFam" id="3.40.50.620:FF:000062">
    <property type="entry name" value="Arginine--tRNA ligase"/>
    <property type="match status" value="1"/>
</dbReference>
<dbReference type="Gene3D" id="3.30.1360.70">
    <property type="entry name" value="Arginyl tRNA synthetase N-terminal domain"/>
    <property type="match status" value="1"/>
</dbReference>
<dbReference type="Gene3D" id="3.40.50.620">
    <property type="entry name" value="HUPs"/>
    <property type="match status" value="1"/>
</dbReference>
<dbReference type="Gene3D" id="1.10.730.10">
    <property type="entry name" value="Isoleucyl-tRNA Synthetase, Domain 1"/>
    <property type="match status" value="1"/>
</dbReference>
<dbReference type="HAMAP" id="MF_00123">
    <property type="entry name" value="Arg_tRNA_synth"/>
    <property type="match status" value="1"/>
</dbReference>
<dbReference type="InterPro" id="IPR001412">
    <property type="entry name" value="aa-tRNA-synth_I_CS"/>
</dbReference>
<dbReference type="InterPro" id="IPR001278">
    <property type="entry name" value="Arg-tRNA-ligase"/>
</dbReference>
<dbReference type="InterPro" id="IPR005148">
    <property type="entry name" value="Arg-tRNA-synth_N"/>
</dbReference>
<dbReference type="InterPro" id="IPR036695">
    <property type="entry name" value="Arg-tRNA-synth_N_sf"/>
</dbReference>
<dbReference type="InterPro" id="IPR035684">
    <property type="entry name" value="ArgRS_core"/>
</dbReference>
<dbReference type="InterPro" id="IPR008909">
    <property type="entry name" value="DALR_anticod-bd"/>
</dbReference>
<dbReference type="InterPro" id="IPR014729">
    <property type="entry name" value="Rossmann-like_a/b/a_fold"/>
</dbReference>
<dbReference type="InterPro" id="IPR009080">
    <property type="entry name" value="tRNAsynth_Ia_anticodon-bd"/>
</dbReference>
<dbReference type="NCBIfam" id="TIGR00456">
    <property type="entry name" value="argS"/>
    <property type="match status" value="1"/>
</dbReference>
<dbReference type="PANTHER" id="PTHR11956:SF5">
    <property type="entry name" value="ARGININE--TRNA LIGASE, CYTOPLASMIC"/>
    <property type="match status" value="1"/>
</dbReference>
<dbReference type="PANTHER" id="PTHR11956">
    <property type="entry name" value="ARGINYL-TRNA SYNTHETASE"/>
    <property type="match status" value="1"/>
</dbReference>
<dbReference type="Pfam" id="PF03485">
    <property type="entry name" value="Arg_tRNA_synt_N"/>
    <property type="match status" value="1"/>
</dbReference>
<dbReference type="Pfam" id="PF05746">
    <property type="entry name" value="DALR_1"/>
    <property type="match status" value="1"/>
</dbReference>
<dbReference type="Pfam" id="PF00750">
    <property type="entry name" value="tRNA-synt_1d"/>
    <property type="match status" value="1"/>
</dbReference>
<dbReference type="PRINTS" id="PR01038">
    <property type="entry name" value="TRNASYNTHARG"/>
</dbReference>
<dbReference type="SMART" id="SM01016">
    <property type="entry name" value="Arg_tRNA_synt_N"/>
    <property type="match status" value="1"/>
</dbReference>
<dbReference type="SMART" id="SM00836">
    <property type="entry name" value="DALR_1"/>
    <property type="match status" value="1"/>
</dbReference>
<dbReference type="SUPFAM" id="SSF47323">
    <property type="entry name" value="Anticodon-binding domain of a subclass of class I aminoacyl-tRNA synthetases"/>
    <property type="match status" value="1"/>
</dbReference>
<dbReference type="SUPFAM" id="SSF55190">
    <property type="entry name" value="Arginyl-tRNA synthetase (ArgRS), N-terminal 'additional' domain"/>
    <property type="match status" value="1"/>
</dbReference>
<dbReference type="SUPFAM" id="SSF52374">
    <property type="entry name" value="Nucleotidylyl transferase"/>
    <property type="match status" value="1"/>
</dbReference>
<dbReference type="PROSITE" id="PS00178">
    <property type="entry name" value="AA_TRNA_LIGASE_I"/>
    <property type="match status" value="1"/>
</dbReference>
<name>SYR_CALS4</name>
<sequence length="562" mass="63693">MENIVQKAKEEIKDVVLKALNEAKKEGLLNFESIQDVEVEEPKEKQHGDLATNFAMVMAREAKMAPRKIAEIIASKMNTSGTFIEKVEVAGPGFINFFLNQNFLIETLKLIHKRGKDYGRVNLGKGKKVQVEFVSANPTGPMHMGNARGGAIGDVLASILDYAGYNVSREFYINDAGNQIEKFGYSLEARYLQLLGIDAEVPEGGYHGEDIIDRAKEFLEIHGDKYKDVPSEERRKALIEYGLKKNIEKMKEDLVLYGIEYDVWFSEQSLYDSGEVYKVIEELTEKGYTYEKDGALWFKMTLFGAEKDDVLVRSNGVPTYLASDIAYHKNKFVTRGFDWVINVWGADHHGHVAPMKGAMKALGIDPNRLDVVLMQLVKLIEGGQVVRMSKRTGKMITLRDLIEEVGKDAARFFFNMRSPDSPIEFDLDLAKQQTNENPVFYVQYAHARICSIIRQLEEMGVKIENIEDVDLGLLKEEEEVDLIKKLAYFPEEITIAAKTLAPHRITRYVIDVASLFHSFYNSHRVKGAEENLMKARFALILAVKTVLKNALDILKVTAPERM</sequence>
<reference key="1">
    <citation type="journal article" date="2002" name="Genome Res.">
        <title>A complete sequence of the T. tengcongensis genome.</title>
        <authorList>
            <person name="Bao Q."/>
            <person name="Tian Y."/>
            <person name="Li W."/>
            <person name="Xu Z."/>
            <person name="Xuan Z."/>
            <person name="Hu S."/>
            <person name="Dong W."/>
            <person name="Yang J."/>
            <person name="Chen Y."/>
            <person name="Xue Y."/>
            <person name="Xu Y."/>
            <person name="Lai X."/>
            <person name="Huang L."/>
            <person name="Dong X."/>
            <person name="Ma Y."/>
            <person name="Ling L."/>
            <person name="Tan H."/>
            <person name="Chen R."/>
            <person name="Wang J."/>
            <person name="Yu J."/>
            <person name="Yang H."/>
        </authorList>
    </citation>
    <scope>NUCLEOTIDE SEQUENCE [LARGE SCALE GENOMIC DNA]</scope>
    <source>
        <strain>DSM 15242 / JCM 11007 / NBRC 100824 / MB4</strain>
    </source>
</reference>
<keyword id="KW-0030">Aminoacyl-tRNA synthetase</keyword>
<keyword id="KW-0067">ATP-binding</keyword>
<keyword id="KW-0963">Cytoplasm</keyword>
<keyword id="KW-0436">Ligase</keyword>
<keyword id="KW-0547">Nucleotide-binding</keyword>
<keyword id="KW-0648">Protein biosynthesis</keyword>
<keyword id="KW-1185">Reference proteome</keyword>
<protein>
    <recommendedName>
        <fullName>Arginine--tRNA ligase</fullName>
        <ecNumber>6.1.1.19</ecNumber>
    </recommendedName>
    <alternativeName>
        <fullName>Arginyl-tRNA synthetase</fullName>
        <shortName>ArgRS</shortName>
    </alternativeName>
</protein>
<accession>Q8R786</accession>
<evidence type="ECO:0000250" key="1"/>
<evidence type="ECO:0000305" key="2"/>
<organism>
    <name type="scientific">Caldanaerobacter subterraneus subsp. tengcongensis (strain DSM 15242 / JCM 11007 / NBRC 100824 / MB4)</name>
    <name type="common">Thermoanaerobacter tengcongensis</name>
    <dbReference type="NCBI Taxonomy" id="273068"/>
    <lineage>
        <taxon>Bacteria</taxon>
        <taxon>Bacillati</taxon>
        <taxon>Bacillota</taxon>
        <taxon>Clostridia</taxon>
        <taxon>Thermoanaerobacterales</taxon>
        <taxon>Thermoanaerobacteraceae</taxon>
        <taxon>Caldanaerobacter</taxon>
    </lineage>
</organism>